<organism>
    <name type="scientific">Homo sapiens</name>
    <name type="common">Human</name>
    <dbReference type="NCBI Taxonomy" id="9606"/>
    <lineage>
        <taxon>Eukaryota</taxon>
        <taxon>Metazoa</taxon>
        <taxon>Chordata</taxon>
        <taxon>Craniata</taxon>
        <taxon>Vertebrata</taxon>
        <taxon>Euteleostomi</taxon>
        <taxon>Mammalia</taxon>
        <taxon>Eutheria</taxon>
        <taxon>Euarchontoglires</taxon>
        <taxon>Primates</taxon>
        <taxon>Haplorrhini</taxon>
        <taxon>Catarrhini</taxon>
        <taxon>Hominidae</taxon>
        <taxon>Homo</taxon>
    </lineage>
</organism>
<gene>
    <name type="primary">CNTNAP4</name>
    <name type="synonym">CASPR4</name>
    <name type="synonym">KIAA1763</name>
</gene>
<reference key="1">
    <citation type="submission" date="2003-01" db="EMBL/GenBank/DDBJ databases">
        <title>ProX human full-length cDNA cloning project.</title>
        <authorList>
            <person name="Hirano K."/>
            <person name="Sano M."/>
            <person name="Murahashi Y."/>
            <person name="Miyauchi A."/>
            <person name="Gonoi T."/>
            <person name="Okabayashi K."/>
        </authorList>
    </citation>
    <scope>NUCLEOTIDE SEQUENCE [MRNA] (ISOFORM 2)</scope>
    <scope>VARIANTS ARG-786 AND GLU-1155</scope>
    <source>
        <tissue>Brain</tissue>
    </source>
</reference>
<reference key="2">
    <citation type="journal article" date="2000" name="DNA Res.">
        <title>Prediction of the coding sequences of unidentified human genes. XIX. The complete sequences of 100 new cDNA clones from brain which code for large proteins in vitro.</title>
        <authorList>
            <person name="Nagase T."/>
            <person name="Kikuno R."/>
            <person name="Hattori A."/>
            <person name="Kondo Y."/>
            <person name="Okumura K."/>
            <person name="Ohara O."/>
        </authorList>
    </citation>
    <scope>NUCLEOTIDE SEQUENCE [LARGE SCALE MRNA] (ISOFORM 1)</scope>
    <scope>VARIANTS ARG-786 AND GLU-1155</scope>
    <source>
        <tissue>Brain</tissue>
    </source>
</reference>
<reference key="3">
    <citation type="submission" date="2003-04" db="EMBL/GenBank/DDBJ databases">
        <authorList>
            <person name="Ohara O."/>
            <person name="Nagase T."/>
            <person name="Yamakawa H."/>
            <person name="Kikuno R."/>
        </authorList>
    </citation>
    <scope>SEQUENCE REVISION</scope>
</reference>
<reference key="4">
    <citation type="journal article" date="2004" name="Nature">
        <title>The sequence and analysis of duplication-rich human chromosome 16.</title>
        <authorList>
            <person name="Martin J."/>
            <person name="Han C."/>
            <person name="Gordon L.A."/>
            <person name="Terry A."/>
            <person name="Prabhakar S."/>
            <person name="She X."/>
            <person name="Xie G."/>
            <person name="Hellsten U."/>
            <person name="Chan Y.M."/>
            <person name="Altherr M."/>
            <person name="Couronne O."/>
            <person name="Aerts A."/>
            <person name="Bajorek E."/>
            <person name="Black S."/>
            <person name="Blumer H."/>
            <person name="Branscomb E."/>
            <person name="Brown N.C."/>
            <person name="Bruno W.J."/>
            <person name="Buckingham J.M."/>
            <person name="Callen D.F."/>
            <person name="Campbell C.S."/>
            <person name="Campbell M.L."/>
            <person name="Campbell E.W."/>
            <person name="Caoile C."/>
            <person name="Challacombe J.F."/>
            <person name="Chasteen L.A."/>
            <person name="Chertkov O."/>
            <person name="Chi H.C."/>
            <person name="Christensen M."/>
            <person name="Clark L.M."/>
            <person name="Cohn J.D."/>
            <person name="Denys M."/>
            <person name="Detter J.C."/>
            <person name="Dickson M."/>
            <person name="Dimitrijevic-Bussod M."/>
            <person name="Escobar J."/>
            <person name="Fawcett J.J."/>
            <person name="Flowers D."/>
            <person name="Fotopulos D."/>
            <person name="Glavina T."/>
            <person name="Gomez M."/>
            <person name="Gonzales E."/>
            <person name="Goodstein D."/>
            <person name="Goodwin L.A."/>
            <person name="Grady D.L."/>
            <person name="Grigoriev I."/>
            <person name="Groza M."/>
            <person name="Hammon N."/>
            <person name="Hawkins T."/>
            <person name="Haydu L."/>
            <person name="Hildebrand C.E."/>
            <person name="Huang W."/>
            <person name="Israni S."/>
            <person name="Jett J."/>
            <person name="Jewett P.B."/>
            <person name="Kadner K."/>
            <person name="Kimball H."/>
            <person name="Kobayashi A."/>
            <person name="Krawczyk M.-C."/>
            <person name="Leyba T."/>
            <person name="Longmire J.L."/>
            <person name="Lopez F."/>
            <person name="Lou Y."/>
            <person name="Lowry S."/>
            <person name="Ludeman T."/>
            <person name="Manohar C.F."/>
            <person name="Mark G.A."/>
            <person name="McMurray K.L."/>
            <person name="Meincke L.J."/>
            <person name="Morgan J."/>
            <person name="Moyzis R.K."/>
            <person name="Mundt M.O."/>
            <person name="Munk A.C."/>
            <person name="Nandkeshwar R.D."/>
            <person name="Pitluck S."/>
            <person name="Pollard M."/>
            <person name="Predki P."/>
            <person name="Parson-Quintana B."/>
            <person name="Ramirez L."/>
            <person name="Rash S."/>
            <person name="Retterer J."/>
            <person name="Ricke D.O."/>
            <person name="Robinson D.L."/>
            <person name="Rodriguez A."/>
            <person name="Salamov A."/>
            <person name="Saunders E.H."/>
            <person name="Scott D."/>
            <person name="Shough T."/>
            <person name="Stallings R.L."/>
            <person name="Stalvey M."/>
            <person name="Sutherland R.D."/>
            <person name="Tapia R."/>
            <person name="Tesmer J.G."/>
            <person name="Thayer N."/>
            <person name="Thompson L.S."/>
            <person name="Tice H."/>
            <person name="Torney D.C."/>
            <person name="Tran-Gyamfi M."/>
            <person name="Tsai M."/>
            <person name="Ulanovsky L.E."/>
            <person name="Ustaszewska A."/>
            <person name="Vo N."/>
            <person name="White P.S."/>
            <person name="Williams A.L."/>
            <person name="Wills P.L."/>
            <person name="Wu J.-R."/>
            <person name="Wu K."/>
            <person name="Yang J."/>
            <person name="DeJong P."/>
            <person name="Bruce D."/>
            <person name="Doggett N.A."/>
            <person name="Deaven L."/>
            <person name="Schmutz J."/>
            <person name="Grimwood J."/>
            <person name="Richardson P."/>
            <person name="Rokhsar D.S."/>
            <person name="Eichler E.E."/>
            <person name="Gilna P."/>
            <person name="Lucas S.M."/>
            <person name="Myers R.M."/>
            <person name="Rubin E.M."/>
            <person name="Pennacchio L.A."/>
        </authorList>
    </citation>
    <scope>NUCLEOTIDE SEQUENCE [LARGE SCALE GENOMIC DNA]</scope>
</reference>
<reference key="5">
    <citation type="journal article" date="2010" name="J. Mol. Biol.">
        <title>The Tiam1 PDZ domain couples to Syndecan1 and promotes cell-matrix adhesion.</title>
        <authorList>
            <person name="Shepherd T.R."/>
            <person name="Klaus S.M."/>
            <person name="Liu X."/>
            <person name="Ramaswamy S."/>
            <person name="DeMali K.A."/>
            <person name="Fuentes E.J."/>
        </authorList>
    </citation>
    <scope>INTERACTION WITH TIAM1</scope>
</reference>
<reference key="6">
    <citation type="journal article" date="2013" name="Structure">
        <title>The structure of the Tiam1 PDZ domain/ phospho-syndecan1 complex reveals a ligand conformation that modulates protein dynamics.</title>
        <authorList>
            <person name="Liu X."/>
            <person name="Shepherd T.R."/>
            <person name="Murray A.M."/>
            <person name="Xu Z."/>
            <person name="Fuentes E.J."/>
        </authorList>
    </citation>
    <scope>INTERACTION WITH TIAM1</scope>
</reference>
<feature type="signal peptide" evidence="3">
    <location>
        <begin position="1"/>
        <end position="25"/>
    </location>
</feature>
<feature type="chain" id="PRO_0000019510" description="Contactin-associated protein-like 4">
    <location>
        <begin position="26"/>
        <end position="1308"/>
    </location>
</feature>
<feature type="topological domain" description="Extracellular" evidence="3">
    <location>
        <begin position="26"/>
        <end position="1241"/>
    </location>
</feature>
<feature type="transmembrane region" description="Helical" evidence="3">
    <location>
        <begin position="1242"/>
        <end position="1262"/>
    </location>
</feature>
<feature type="topological domain" description="Cytoplasmic" evidence="3">
    <location>
        <begin position="1263"/>
        <end position="1308"/>
    </location>
</feature>
<feature type="domain" description="F5/8 type C" evidence="5">
    <location>
        <begin position="31"/>
        <end position="177"/>
    </location>
</feature>
<feature type="domain" description="Laminin G-like 1" evidence="6">
    <location>
        <begin position="212"/>
        <end position="364"/>
    </location>
</feature>
<feature type="domain" description="Laminin G-like 2" evidence="6">
    <location>
        <begin position="398"/>
        <end position="547"/>
    </location>
</feature>
<feature type="domain" description="EGF-like 1" evidence="4">
    <location>
        <begin position="549"/>
        <end position="586"/>
    </location>
</feature>
<feature type="domain" description="Fibrinogen C-terminal" evidence="7">
    <location>
        <begin position="587"/>
        <end position="792"/>
    </location>
</feature>
<feature type="domain" description="Laminin G-like 3" evidence="6">
    <location>
        <begin position="793"/>
        <end position="957"/>
    </location>
</feature>
<feature type="domain" description="EGF-like 2" evidence="4">
    <location>
        <begin position="958"/>
        <end position="997"/>
    </location>
</feature>
<feature type="domain" description="Laminin G-like 4" evidence="6">
    <location>
        <begin position="1046"/>
        <end position="1202"/>
    </location>
</feature>
<feature type="glycosylation site" description="N-linked (GlcNAc...) asparagine" evidence="3">
    <location>
        <position position="260"/>
    </location>
</feature>
<feature type="glycosylation site" description="N-linked (GlcNAc...) asparagine" evidence="3">
    <location>
        <position position="285"/>
    </location>
</feature>
<feature type="glycosylation site" description="N-linked (GlcNAc...) asparagine" evidence="3">
    <location>
        <position position="359"/>
    </location>
</feature>
<feature type="glycosylation site" description="N-linked (GlcNAc...) asparagine" evidence="3">
    <location>
        <position position="538"/>
    </location>
</feature>
<feature type="glycosylation site" description="N-linked (GlcNAc...) asparagine" evidence="3">
    <location>
        <position position="574"/>
    </location>
</feature>
<feature type="glycosylation site" description="N-linked (GlcNAc...) asparagine" evidence="3">
    <location>
        <position position="602"/>
    </location>
</feature>
<feature type="glycosylation site" description="N-linked (GlcNAc...) asparagine" evidence="3">
    <location>
        <position position="625"/>
    </location>
</feature>
<feature type="glycosylation site" description="N-linked (GlcNAc...) asparagine" evidence="3">
    <location>
        <position position="637"/>
    </location>
</feature>
<feature type="glycosylation site" description="N-linked (GlcNAc...) asparagine" evidence="3">
    <location>
        <position position="706"/>
    </location>
</feature>
<feature type="glycosylation site" description="N-linked (GlcNAc...) asparagine" evidence="3">
    <location>
        <position position="748"/>
    </location>
</feature>
<feature type="glycosylation site" description="N-linked (GlcNAc...) asparagine" evidence="3">
    <location>
        <position position="1023"/>
    </location>
</feature>
<feature type="glycosylation site" description="N-linked (GlcNAc...) asparagine" evidence="3">
    <location>
        <position position="1073"/>
    </location>
</feature>
<feature type="disulfide bond" evidence="1">
    <location>
        <begin position="31"/>
        <end position="177"/>
    </location>
</feature>
<feature type="disulfide bond" evidence="1">
    <location>
        <begin position="332"/>
        <end position="364"/>
    </location>
</feature>
<feature type="disulfide bond" evidence="1">
    <location>
        <begin position="515"/>
        <end position="547"/>
    </location>
</feature>
<feature type="disulfide bond" evidence="1">
    <location>
        <begin position="553"/>
        <end position="564"/>
    </location>
</feature>
<feature type="disulfide bond" evidence="1">
    <location>
        <begin position="558"/>
        <end position="573"/>
    </location>
</feature>
<feature type="disulfide bond" evidence="1">
    <location>
        <begin position="575"/>
        <end position="585"/>
    </location>
</feature>
<feature type="disulfide bond" evidence="1">
    <location>
        <begin position="931"/>
        <end position="958"/>
    </location>
</feature>
<feature type="disulfide bond" evidence="1">
    <location>
        <begin position="962"/>
        <end position="975"/>
    </location>
</feature>
<feature type="disulfide bond" evidence="1">
    <location>
        <begin position="969"/>
        <end position="984"/>
    </location>
</feature>
<feature type="disulfide bond" evidence="1">
    <location>
        <begin position="986"/>
        <end position="996"/>
    </location>
</feature>
<feature type="disulfide bond" evidence="1">
    <location>
        <begin position="1167"/>
        <end position="1202"/>
    </location>
</feature>
<feature type="splice variant" id="VSP_044464" description="In isoform 2." evidence="12">
    <original>MGSVTGAVLKTLLLLSTQNWNRVEAGNS</original>
    <variation>MWN</variation>
    <location>
        <begin position="1"/>
        <end position="28"/>
    </location>
</feature>
<feature type="splice variant" id="VSP_044465" description="In isoform 2." evidence="12">
    <location>
        <begin position="310"/>
        <end position="357"/>
    </location>
</feature>
<feature type="sequence variant" id="VAR_061371" description="In dbSNP:rs34251012.">
    <original>L</original>
    <variation>V</variation>
    <location>
        <position position="276"/>
    </location>
</feature>
<feature type="sequence variant" id="VAR_050268" description="In dbSNP:rs6564343.">
    <original>Q</original>
    <variation>H</variation>
    <location>
        <position position="513"/>
    </location>
</feature>
<feature type="sequence variant" id="VAR_061372" description="In dbSNP:rs12933808." evidence="8 11">
    <original>Q</original>
    <variation>R</variation>
    <location>
        <position position="786"/>
    </location>
</feature>
<feature type="sequence variant" id="VAR_050269" description="In dbSNP:rs7202925." evidence="8 11">
    <original>D</original>
    <variation>E</variation>
    <location>
        <position position="1155"/>
    </location>
</feature>
<feature type="sequence variant" id="VAR_050270" description="In dbSNP:rs34198820.">
    <original>N</original>
    <variation>S</variation>
    <location>
        <position position="1300"/>
    </location>
</feature>
<feature type="sequence conflict" description="In Ref. 1; BAC55271." evidence="13" ref="1">
    <original>L</original>
    <variation>R</variation>
    <location>
        <position position="244"/>
    </location>
</feature>
<feature type="strand" evidence="14">
    <location>
        <begin position="1304"/>
        <end position="1307"/>
    </location>
</feature>
<name>CNTP4_HUMAN</name>
<sequence length="1308" mass="145274">MGSVTGAVLKTLLLLSTQNWNRVEAGNSYDCDDPLVSALPQASFSSSSELSSSHGPGFARLNRRDGAGGWSPLVSNKYQWLQIDLGERMEVTAVATQGGYGSSNWVTSYLLMFSDSGWNWKQYRQEDSIWGFSGNANADSVVYYRLQPSIKARFLRFIPLEWNPKGRIGMRIEVFGCAYRSEVVDLDGKSSLLYRFDQKSLSPIKDIISLKFKTMQSDGILLHREGPNGDHITLQLRRARLFLLINSGEAKLPSTSTLVNLTLGSLLDDQHWHSVLIQRLGKQVNFTVDEHRHHFHARGEFNLMNLDYEISFGGIPAPGKSVSFPHRNFHGCLENLYYNGVDIIDLAKQQKPQIIAMGNVSFSCSQPQSMPVTFLSSRSYLALPDFSGEEEVSATFQFRTWNKAGLLLFSELQLISGGILLFLSDGKLKSNLYQPGKLPSDITAGVELNDGQWHSVSLSAKKNHLSVAVDGQMASAAPLLGPEQIYSGGTYYFGGCPDKSFGSKCKSPLGGFQGCMRLISISGKVVDLISVQQGSLGNFSDLQIDSCGISDRCLPNYCEHGGECSQSWSTFHCNCTNTGYRGATCHNSIYEQSCEAYKHRGNTSGFYYIDSDGSGPLEPFLLYCNMTETAWTIIQHNGSDLTRVRNTNPENPYAGFFEYVASMEQLQATINRAEHCEQEFTYYCKKSRLVNKQDGTPLSWWVGRTNETQTYWGGSSPDLQKCTCGLEGNCIDSQYYCNCDADRNEWTNDTGLLAYKEHLPVTKIVITDTGRLHSEAAYKLGPLLCQGDRSFWNSASFDTEASYLHFPTFHGELSADVSFFFKTTASSGVFLENLGIADFIRIELRSPTVVTFSFDVGNGPFEISVQSPTHFNDNQWHHVRVERNMKEASLQVDQLTPKTQPAPADGHVLLQLNSQLFVGGTATRQRGFLGCIRSLQLNGMTLDLEERAQVTPEVQPGCRGHCSSYGKLCRNGGKCRERPIGFFCDCTFSAYTGPFCSNEISAYFGSGSSVIYNFQENYLLSKNSSSHAASFHGDMKLSREMIKFSFRTTRTPSLLLFVSSFYKEYLSVIIAKNGSLQIRYKLNKYQEPDVVNFDFKNMADGQLHHIMINREEGVVFIEIDDNRRRQVHLSSGTEFSAVKSLVLGRILEHSDVDQDTALAGAQGFTGCLSAVQLSHVAPLKAALHPSHPDPVTVTGHVTESSCMAQPGTDATSRERTHSFADHSGTIDDREPLANAIKSDSAVIGGLIAVVIFILLCITAIAVRIYQQKRLYKRSEAKRSENVDSAEAVLKSELNIQNAVNENQKEYFF</sequence>
<comment type="function">
    <text evidence="1">Presynaptic protein involved in both dopaminergic synaptic transmission and GABAergic system, thereby participating in the structural maturation of inhibitory interneuron synapses. Involved in the dopaminergic synaptic transmission by attenuating dopamine release through a presynaptic mechanism. Also participates in the GABAergic system (By similarity).</text>
</comment>
<comment type="subunit">
    <text evidence="9 10">Interacts with TIAM1.</text>
</comment>
<comment type="interaction">
    <interactant intactId="EBI-16035743">
        <id>Q9C0A0-1</id>
    </interactant>
    <interactant intactId="EBI-1050007">
        <id>Q13009</id>
        <label>TIAM1</label>
    </interactant>
    <organismsDiffer>false</organismsDiffer>
    <experiments>2</experiments>
</comment>
<comment type="subcellular location">
    <subcellularLocation>
        <location evidence="2">Presynaptic cell membrane</location>
        <topology evidence="2">Single-pass type I membrane protein</topology>
    </subcellularLocation>
    <text evidence="2">Specifically present within the presynaptic compartment of synapses.</text>
</comment>
<comment type="alternative products">
    <event type="alternative splicing"/>
    <isoform>
        <id>Q9C0A0-1</id>
        <name>1</name>
        <sequence type="displayed"/>
    </isoform>
    <isoform>
        <id>Q9C0A0-2</id>
        <name>2</name>
        <sequence type="described" ref="VSP_044464 VSP_044465"/>
    </isoform>
</comment>
<comment type="similarity">
    <text evidence="13">Belongs to the neurexin family.</text>
</comment>
<comment type="sequence caution" evidence="13">
    <conflict type="erroneous initiation">
        <sequence resource="EMBL-CDS" id="BAB21854"/>
    </conflict>
    <text>Extended N-terminus.</text>
</comment>
<accession>Q9C0A0</accession>
<accession>E9PFZ6</accession>
<accession>Q86YZ7</accession>
<protein>
    <recommendedName>
        <fullName>Contactin-associated protein-like 4</fullName>
    </recommendedName>
    <alternativeName>
        <fullName>Cell recognition molecule Caspr4</fullName>
    </alternativeName>
</protein>
<proteinExistence type="evidence at protein level"/>
<evidence type="ECO:0000250" key="1"/>
<evidence type="ECO:0000250" key="2">
    <source>
        <dbReference type="UniProtKB" id="Q99P47"/>
    </source>
</evidence>
<evidence type="ECO:0000255" key="3"/>
<evidence type="ECO:0000255" key="4">
    <source>
        <dbReference type="PROSITE-ProRule" id="PRU00076"/>
    </source>
</evidence>
<evidence type="ECO:0000255" key="5">
    <source>
        <dbReference type="PROSITE-ProRule" id="PRU00081"/>
    </source>
</evidence>
<evidence type="ECO:0000255" key="6">
    <source>
        <dbReference type="PROSITE-ProRule" id="PRU00122"/>
    </source>
</evidence>
<evidence type="ECO:0000255" key="7">
    <source>
        <dbReference type="PROSITE-ProRule" id="PRU00739"/>
    </source>
</evidence>
<evidence type="ECO:0000269" key="8">
    <source>
    </source>
</evidence>
<evidence type="ECO:0000269" key="9">
    <source>
    </source>
</evidence>
<evidence type="ECO:0000269" key="10">
    <source>
    </source>
</evidence>
<evidence type="ECO:0000269" key="11">
    <source ref="1"/>
</evidence>
<evidence type="ECO:0000303" key="12">
    <source ref="1"/>
</evidence>
<evidence type="ECO:0000305" key="13"/>
<evidence type="ECO:0007829" key="14">
    <source>
        <dbReference type="PDB" id="4NXQ"/>
    </source>
</evidence>
<keyword id="KW-0002">3D-structure</keyword>
<keyword id="KW-0025">Alternative splicing</keyword>
<keyword id="KW-0130">Cell adhesion</keyword>
<keyword id="KW-1003">Cell membrane</keyword>
<keyword id="KW-0966">Cell projection</keyword>
<keyword id="KW-1015">Disulfide bond</keyword>
<keyword id="KW-0245">EGF-like domain</keyword>
<keyword id="KW-0325">Glycoprotein</keyword>
<keyword id="KW-0472">Membrane</keyword>
<keyword id="KW-1267">Proteomics identification</keyword>
<keyword id="KW-1185">Reference proteome</keyword>
<keyword id="KW-0677">Repeat</keyword>
<keyword id="KW-0732">Signal</keyword>
<keyword id="KW-0770">Synapse</keyword>
<keyword id="KW-0812">Transmembrane</keyword>
<keyword id="KW-1133">Transmembrane helix</keyword>
<dbReference type="EMBL" id="AB100093">
    <property type="protein sequence ID" value="BAC55271.1"/>
    <property type="molecule type" value="mRNA"/>
</dbReference>
<dbReference type="EMBL" id="AB051550">
    <property type="protein sequence ID" value="BAB21854.2"/>
    <property type="status" value="ALT_INIT"/>
    <property type="molecule type" value="mRNA"/>
</dbReference>
<dbReference type="EMBL" id="AC010528">
    <property type="status" value="NOT_ANNOTATED_CDS"/>
    <property type="molecule type" value="Genomic_DNA"/>
</dbReference>
<dbReference type="EMBL" id="AC106741">
    <property type="status" value="NOT_ANNOTATED_CDS"/>
    <property type="molecule type" value="Genomic_DNA"/>
</dbReference>
<dbReference type="CCDS" id="CCDS10924.2">
    <molecule id="Q9C0A0-2"/>
</dbReference>
<dbReference type="CCDS" id="CCDS73915.1">
    <molecule id="Q9C0A0-1"/>
</dbReference>
<dbReference type="RefSeq" id="NP_207837.2">
    <molecule id="Q9C0A0-1"/>
    <property type="nucleotide sequence ID" value="NM_033401.5"/>
</dbReference>
<dbReference type="RefSeq" id="NP_620481.2">
    <molecule id="Q9C0A0-2"/>
    <property type="nucleotide sequence ID" value="NM_138994.5"/>
</dbReference>
<dbReference type="PDB" id="4NXQ">
    <property type="method" value="X-ray"/>
    <property type="resolution" value="2.10 A"/>
    <property type="chains" value="D/E/F=1301-1308"/>
</dbReference>
<dbReference type="PDBsum" id="4NXQ"/>
<dbReference type="SMR" id="Q9C0A0"/>
<dbReference type="BioGRID" id="124532">
    <property type="interactions" value="22"/>
</dbReference>
<dbReference type="DIP" id="DIP-31652N"/>
<dbReference type="FunCoup" id="Q9C0A0">
    <property type="interactions" value="91"/>
</dbReference>
<dbReference type="IntAct" id="Q9C0A0">
    <property type="interactions" value="7"/>
</dbReference>
<dbReference type="MINT" id="Q9C0A0"/>
<dbReference type="STRING" id="9606.ENSP00000479811"/>
<dbReference type="GlyCosmos" id="Q9C0A0">
    <property type="glycosylation" value="12 sites, No reported glycans"/>
</dbReference>
<dbReference type="GlyGen" id="Q9C0A0">
    <property type="glycosylation" value="12 sites"/>
</dbReference>
<dbReference type="iPTMnet" id="Q9C0A0"/>
<dbReference type="PhosphoSitePlus" id="Q9C0A0"/>
<dbReference type="BioMuta" id="CNTNAP4"/>
<dbReference type="DMDM" id="209572753"/>
<dbReference type="jPOST" id="Q9C0A0"/>
<dbReference type="MassIVE" id="Q9C0A0"/>
<dbReference type="PaxDb" id="9606-ENSP00000479811"/>
<dbReference type="PeptideAtlas" id="Q9C0A0"/>
<dbReference type="ProteomicsDB" id="20213"/>
<dbReference type="ProteomicsDB" id="79975">
    <molecule id="Q9C0A0-1"/>
</dbReference>
<dbReference type="Antibodypedia" id="30357">
    <property type="antibodies" value="181 antibodies from 25 providers"/>
</dbReference>
<dbReference type="DNASU" id="85445"/>
<dbReference type="Ensembl" id="ENST00000478060.5">
    <molecule id="Q9C0A0-2"/>
    <property type="protein sequence ID" value="ENSP00000418741.1"/>
    <property type="gene ID" value="ENSG00000152910.19"/>
</dbReference>
<dbReference type="Ensembl" id="ENST00000611870.5">
    <molecule id="Q9C0A0-1"/>
    <property type="protein sequence ID" value="ENSP00000479811.1"/>
    <property type="gene ID" value="ENSG00000152910.19"/>
</dbReference>
<dbReference type="GeneID" id="85445"/>
<dbReference type="KEGG" id="hsa:85445"/>
<dbReference type="MANE-Select" id="ENST00000611870.5">
    <property type="protein sequence ID" value="ENSP00000479811.1"/>
    <property type="RefSeq nucleotide sequence ID" value="NM_033401.5"/>
    <property type="RefSeq protein sequence ID" value="NP_207837.2"/>
</dbReference>
<dbReference type="UCSC" id="uc010chb.2">
    <molecule id="Q9C0A0-1"/>
    <property type="organism name" value="human"/>
</dbReference>
<dbReference type="AGR" id="HGNC:18747"/>
<dbReference type="CTD" id="85445"/>
<dbReference type="DisGeNET" id="85445"/>
<dbReference type="GeneCards" id="CNTNAP4"/>
<dbReference type="HGNC" id="HGNC:18747">
    <property type="gene designation" value="CNTNAP4"/>
</dbReference>
<dbReference type="HPA" id="ENSG00000152910">
    <property type="expression patterns" value="Tissue enriched (brain)"/>
</dbReference>
<dbReference type="MIM" id="610518">
    <property type="type" value="gene"/>
</dbReference>
<dbReference type="neXtProt" id="NX_Q9C0A0"/>
<dbReference type="OpenTargets" id="ENSG00000152910"/>
<dbReference type="PharmGKB" id="PA134874662"/>
<dbReference type="VEuPathDB" id="HostDB:ENSG00000152910"/>
<dbReference type="eggNOG" id="KOG3516">
    <property type="taxonomic scope" value="Eukaryota"/>
</dbReference>
<dbReference type="GeneTree" id="ENSGT00940000157674"/>
<dbReference type="HOGENOM" id="CLU_003504_1_0_1"/>
<dbReference type="InParanoid" id="Q9C0A0"/>
<dbReference type="OMA" id="CANTGYM"/>
<dbReference type="OrthoDB" id="26719at2759"/>
<dbReference type="PAN-GO" id="Q9C0A0">
    <property type="GO annotations" value="0 GO annotations based on evolutionary models"/>
</dbReference>
<dbReference type="PhylomeDB" id="Q9C0A0"/>
<dbReference type="TreeFam" id="TF321823"/>
<dbReference type="PathwayCommons" id="Q9C0A0"/>
<dbReference type="SignaLink" id="Q9C0A0"/>
<dbReference type="BioGRID-ORCS" id="85445">
    <property type="hits" value="9 hits in 1143 CRISPR screens"/>
</dbReference>
<dbReference type="ChiTaRS" id="CNTNAP4">
    <property type="organism name" value="human"/>
</dbReference>
<dbReference type="EvolutionaryTrace" id="Q9C0A0"/>
<dbReference type="GeneWiki" id="CNTNAP4"/>
<dbReference type="GenomeRNAi" id="85445"/>
<dbReference type="Pharos" id="Q9C0A0">
    <property type="development level" value="Tbio"/>
</dbReference>
<dbReference type="PRO" id="PR:Q9C0A0"/>
<dbReference type="Proteomes" id="UP000005640">
    <property type="component" value="Chromosome 16"/>
</dbReference>
<dbReference type="RNAct" id="Q9C0A0">
    <property type="molecule type" value="protein"/>
</dbReference>
<dbReference type="Bgee" id="ENSG00000152910">
    <property type="expression patterns" value="Expressed in C1 segment of cervical spinal cord and 113 other cell types or tissues"/>
</dbReference>
<dbReference type="ExpressionAtlas" id="Q9C0A0">
    <property type="expression patterns" value="baseline and differential"/>
</dbReference>
<dbReference type="GO" id="GO:0042995">
    <property type="term" value="C:cell projection"/>
    <property type="evidence" value="ECO:0007669"/>
    <property type="project" value="UniProtKB-KW"/>
</dbReference>
<dbReference type="GO" id="GO:0042734">
    <property type="term" value="C:presynaptic membrane"/>
    <property type="evidence" value="ECO:0000250"/>
    <property type="project" value="UniProtKB"/>
</dbReference>
<dbReference type="GO" id="GO:0007155">
    <property type="term" value="P:cell adhesion"/>
    <property type="evidence" value="ECO:0007669"/>
    <property type="project" value="UniProtKB-KW"/>
</dbReference>
<dbReference type="GO" id="GO:2000821">
    <property type="term" value="P:regulation of grooming behavior"/>
    <property type="evidence" value="ECO:0000250"/>
    <property type="project" value="UniProtKB"/>
</dbReference>
<dbReference type="GO" id="GO:0032225">
    <property type="term" value="P:regulation of synaptic transmission, dopaminergic"/>
    <property type="evidence" value="ECO:0000250"/>
    <property type="project" value="UniProtKB"/>
</dbReference>
<dbReference type="GO" id="GO:0032228">
    <property type="term" value="P:regulation of synaptic transmission, GABAergic"/>
    <property type="evidence" value="ECO:0000250"/>
    <property type="project" value="UniProtKB"/>
</dbReference>
<dbReference type="CDD" id="cd00054">
    <property type="entry name" value="EGF_CA"/>
    <property type="match status" value="2"/>
</dbReference>
<dbReference type="CDD" id="cd00057">
    <property type="entry name" value="FA58C"/>
    <property type="match status" value="1"/>
</dbReference>
<dbReference type="CDD" id="cd00110">
    <property type="entry name" value="LamG"/>
    <property type="match status" value="4"/>
</dbReference>
<dbReference type="FunFam" id="2.60.120.200:FF:000138">
    <property type="entry name" value="Contactin associated protein like 4"/>
    <property type="match status" value="1"/>
</dbReference>
<dbReference type="FunFam" id="2.60.120.1000:FF:000005">
    <property type="entry name" value="Contactin associated protein-like 2"/>
    <property type="match status" value="1"/>
</dbReference>
<dbReference type="FunFam" id="2.60.120.200:FF:000088">
    <property type="entry name" value="Contactin associated protein-like 2"/>
    <property type="match status" value="1"/>
</dbReference>
<dbReference type="FunFam" id="2.60.120.200:FF:000186">
    <property type="entry name" value="Contactin-associated protein-like 4"/>
    <property type="match status" value="1"/>
</dbReference>
<dbReference type="FunFam" id="2.60.120.260:FF:000016">
    <property type="entry name" value="Contactin-associated protein-like 4 isoform 1"/>
    <property type="match status" value="1"/>
</dbReference>
<dbReference type="FunFam" id="2.60.120.200:FF:000026">
    <property type="entry name" value="contactin-associated protein-like 4 isoform X1"/>
    <property type="match status" value="1"/>
</dbReference>
<dbReference type="Gene3D" id="2.60.120.1000">
    <property type="match status" value="1"/>
</dbReference>
<dbReference type="Gene3D" id="2.60.120.200">
    <property type="match status" value="4"/>
</dbReference>
<dbReference type="Gene3D" id="2.60.120.260">
    <property type="entry name" value="Galactose-binding domain-like"/>
    <property type="match status" value="1"/>
</dbReference>
<dbReference type="Gene3D" id="2.10.25.10">
    <property type="entry name" value="Laminin"/>
    <property type="match status" value="1"/>
</dbReference>
<dbReference type="InterPro" id="IPR013320">
    <property type="entry name" value="ConA-like_dom_sf"/>
</dbReference>
<dbReference type="InterPro" id="IPR000742">
    <property type="entry name" value="EGF-like_dom"/>
</dbReference>
<dbReference type="InterPro" id="IPR000421">
    <property type="entry name" value="FA58C"/>
</dbReference>
<dbReference type="InterPro" id="IPR036056">
    <property type="entry name" value="Fibrinogen-like_C"/>
</dbReference>
<dbReference type="InterPro" id="IPR002181">
    <property type="entry name" value="Fibrinogen_a/b/g_C_dom"/>
</dbReference>
<dbReference type="InterPro" id="IPR008979">
    <property type="entry name" value="Galactose-bd-like_sf"/>
</dbReference>
<dbReference type="InterPro" id="IPR001791">
    <property type="entry name" value="Laminin_G"/>
</dbReference>
<dbReference type="InterPro" id="IPR050372">
    <property type="entry name" value="Neurexin-related_CASP"/>
</dbReference>
<dbReference type="NCBIfam" id="NF040941">
    <property type="entry name" value="GGGWT_bact"/>
    <property type="match status" value="1"/>
</dbReference>
<dbReference type="PANTHER" id="PTHR15036:SF40">
    <property type="entry name" value="CONTACTIN-ASSOCIATED PROTEIN-LIKE 4"/>
    <property type="match status" value="1"/>
</dbReference>
<dbReference type="PANTHER" id="PTHR15036">
    <property type="entry name" value="PIKACHURIN-LIKE PROTEIN"/>
    <property type="match status" value="1"/>
</dbReference>
<dbReference type="Pfam" id="PF00754">
    <property type="entry name" value="F5_F8_type_C"/>
    <property type="match status" value="1"/>
</dbReference>
<dbReference type="Pfam" id="PF02210">
    <property type="entry name" value="Laminin_G_2"/>
    <property type="match status" value="4"/>
</dbReference>
<dbReference type="SMART" id="SM00181">
    <property type="entry name" value="EGF"/>
    <property type="match status" value="2"/>
</dbReference>
<dbReference type="SMART" id="SM00231">
    <property type="entry name" value="FA58C"/>
    <property type="match status" value="1"/>
</dbReference>
<dbReference type="SMART" id="SM00282">
    <property type="entry name" value="LamG"/>
    <property type="match status" value="4"/>
</dbReference>
<dbReference type="SUPFAM" id="SSF49899">
    <property type="entry name" value="Concanavalin A-like lectins/glucanases"/>
    <property type="match status" value="4"/>
</dbReference>
<dbReference type="SUPFAM" id="SSF57196">
    <property type="entry name" value="EGF/Laminin"/>
    <property type="match status" value="1"/>
</dbReference>
<dbReference type="SUPFAM" id="SSF56496">
    <property type="entry name" value="Fibrinogen C-terminal domain-like"/>
    <property type="match status" value="1"/>
</dbReference>
<dbReference type="SUPFAM" id="SSF49785">
    <property type="entry name" value="Galactose-binding domain-like"/>
    <property type="match status" value="1"/>
</dbReference>
<dbReference type="PROSITE" id="PS50026">
    <property type="entry name" value="EGF_3"/>
    <property type="match status" value="2"/>
</dbReference>
<dbReference type="PROSITE" id="PS01285">
    <property type="entry name" value="FA58C_1"/>
    <property type="match status" value="1"/>
</dbReference>
<dbReference type="PROSITE" id="PS01286">
    <property type="entry name" value="FA58C_2"/>
    <property type="match status" value="1"/>
</dbReference>
<dbReference type="PROSITE" id="PS50022">
    <property type="entry name" value="FA58C_3"/>
    <property type="match status" value="1"/>
</dbReference>
<dbReference type="PROSITE" id="PS51406">
    <property type="entry name" value="FIBRINOGEN_C_2"/>
    <property type="match status" value="1"/>
</dbReference>
<dbReference type="PROSITE" id="PS50025">
    <property type="entry name" value="LAM_G_DOMAIN"/>
    <property type="match status" value="4"/>
</dbReference>